<keyword id="KW-0067">ATP-binding</keyword>
<keyword id="KW-0227">DNA damage</keyword>
<keyword id="KW-0233">DNA recombination</keyword>
<keyword id="KW-0234">DNA repair</keyword>
<keyword id="KW-0238">DNA-binding</keyword>
<keyword id="KW-0347">Helicase</keyword>
<keyword id="KW-0378">Hydrolase</keyword>
<keyword id="KW-0413">Isomerase</keyword>
<keyword id="KW-0547">Nucleotide-binding</keyword>
<keyword id="KW-1185">Reference proteome</keyword>
<reference key="1">
    <citation type="journal article" date="1997" name="Nature">
        <title>Genomic sequence of a Lyme disease spirochaete, Borrelia burgdorferi.</title>
        <authorList>
            <person name="Fraser C.M."/>
            <person name="Casjens S."/>
            <person name="Huang W.M."/>
            <person name="Sutton G.G."/>
            <person name="Clayton R.A."/>
            <person name="Lathigra R."/>
            <person name="White O."/>
            <person name="Ketchum K.A."/>
            <person name="Dodson R.J."/>
            <person name="Hickey E.K."/>
            <person name="Gwinn M.L."/>
            <person name="Dougherty B.A."/>
            <person name="Tomb J.-F."/>
            <person name="Fleischmann R.D."/>
            <person name="Richardson D.L."/>
            <person name="Peterson J.D."/>
            <person name="Kerlavage A.R."/>
            <person name="Quackenbush J."/>
            <person name="Salzberg S.L."/>
            <person name="Hanson M."/>
            <person name="van Vugt R."/>
            <person name="Palmer N."/>
            <person name="Adams M.D."/>
            <person name="Gocayne J.D."/>
            <person name="Weidman J.F."/>
            <person name="Utterback T.R."/>
            <person name="Watthey L."/>
            <person name="McDonald L.A."/>
            <person name="Artiach P."/>
            <person name="Bowman C."/>
            <person name="Garland S.A."/>
            <person name="Fujii C."/>
            <person name="Cotton M.D."/>
            <person name="Horst K."/>
            <person name="Roberts K.M."/>
            <person name="Hatch B."/>
            <person name="Smith H.O."/>
            <person name="Venter J.C."/>
        </authorList>
    </citation>
    <scope>NUCLEOTIDE SEQUENCE [LARGE SCALE GENOMIC DNA]</scope>
    <source>
        <strain>ATCC 35210 / DSM 4680 / CIP 102532 / B31</strain>
    </source>
</reference>
<reference key="2">
    <citation type="journal article" date="2008" name="Proc. Natl. Acad. Sci. U.S.A.">
        <title>MLST of housekeeping genes captures geographic population structure and suggests a European origin of Borrelia burgdorferi.</title>
        <authorList>
            <person name="Margos G."/>
            <person name="Gatewood A.G."/>
            <person name="Aanensen D.M."/>
            <person name="Hanincova K."/>
            <person name="Terekhova D."/>
            <person name="Vollmer S.A."/>
            <person name="Cornet M."/>
            <person name="Piesman J."/>
            <person name="Donaghy M."/>
            <person name="Bormane A."/>
            <person name="Hurn M.A."/>
            <person name="Feil E.J."/>
            <person name="Fish D."/>
            <person name="Casjens S."/>
            <person name="Wormser G.P."/>
            <person name="Schwartz I."/>
            <person name="Kurtenbach K."/>
        </authorList>
    </citation>
    <scope>BIOTECHNOLOGY</scope>
    <source>
        <strain>ATCC 35210 / DSM 4680 / CIP 102532 / B31</strain>
    </source>
</reference>
<evidence type="ECO:0000250" key="1">
    <source>
        <dbReference type="UniProtKB" id="P24230"/>
    </source>
</evidence>
<evidence type="ECO:0000250" key="2">
    <source>
        <dbReference type="UniProtKB" id="Q9WY48"/>
    </source>
</evidence>
<evidence type="ECO:0000255" key="3">
    <source>
        <dbReference type="PROSITE-ProRule" id="PRU00541"/>
    </source>
</evidence>
<evidence type="ECO:0000255" key="4">
    <source>
        <dbReference type="PROSITE-ProRule" id="PRU00542"/>
    </source>
</evidence>
<evidence type="ECO:0000269" key="5">
    <source>
    </source>
</evidence>
<evidence type="ECO:0000305" key="6"/>
<gene>
    <name type="primary">recG</name>
    <name type="ordered locus">BB_0581</name>
</gene>
<comment type="function">
    <text evidence="1">Plays a critical role in recombination and DNA repair. Helps process Holliday junction intermediates to mature products by catalyzing branch migration. Has replication fork regression activity, unwinds stalled or blocked replication forks to make a HJ that can be resolved. Has a DNA unwinding activity characteristic of a DNA helicase with 3'-5' polarity (By similarity).</text>
</comment>
<comment type="catalytic activity">
    <reaction evidence="1">
        <text>Couples ATP hydrolysis with the unwinding of duplex DNA by translocating in the 3'-5' direction.</text>
        <dbReference type="EC" id="5.6.2.4"/>
    </reaction>
</comment>
<comment type="catalytic activity">
    <reaction evidence="1">
        <text>ATP + H2O = ADP + phosphate + H(+)</text>
        <dbReference type="Rhea" id="RHEA:13065"/>
        <dbReference type="ChEBI" id="CHEBI:15377"/>
        <dbReference type="ChEBI" id="CHEBI:15378"/>
        <dbReference type="ChEBI" id="CHEBI:30616"/>
        <dbReference type="ChEBI" id="CHEBI:43474"/>
        <dbReference type="ChEBI" id="CHEBI:456216"/>
        <dbReference type="EC" id="5.6.2.4"/>
    </reaction>
</comment>
<comment type="subunit">
    <text evidence="2">Monomer (By similarity).</text>
</comment>
<comment type="domain">
    <text evidence="2">The wedge domain within the N-terminus inserts into the replication fork junction, where the lagging and leading strand split (By similarity).</text>
</comment>
<comment type="biotechnology">
    <text evidence="5">One of 8 loci used for multilocus sequence typing (MLST) in Borrelia burgdorferi (PubMed:18574151).</text>
</comment>
<comment type="similarity">
    <text evidence="6">Belongs to the helicase family. RecG subfamily.</text>
</comment>
<dbReference type="EC" id="5.6.2.4" evidence="1"/>
<dbReference type="EMBL" id="AE000783">
    <property type="protein sequence ID" value="AAC66942.1"/>
    <property type="molecule type" value="Genomic_DNA"/>
</dbReference>
<dbReference type="PIR" id="D70172">
    <property type="entry name" value="D70172"/>
</dbReference>
<dbReference type="RefSeq" id="NP_212715.1">
    <property type="nucleotide sequence ID" value="NC_001318.1"/>
</dbReference>
<dbReference type="RefSeq" id="WP_002656646.1">
    <property type="nucleotide sequence ID" value="NC_001318.1"/>
</dbReference>
<dbReference type="SMR" id="O51528"/>
<dbReference type="STRING" id="224326.BB_0581"/>
<dbReference type="PaxDb" id="224326-BB_0581"/>
<dbReference type="EnsemblBacteria" id="AAC66942">
    <property type="protein sequence ID" value="AAC66942"/>
    <property type="gene ID" value="BB_0581"/>
</dbReference>
<dbReference type="GeneID" id="56568014"/>
<dbReference type="KEGG" id="bbu:BB_0581"/>
<dbReference type="PATRIC" id="fig|224326.49.peg.972"/>
<dbReference type="HOGENOM" id="CLU_005122_7_1_12"/>
<dbReference type="OrthoDB" id="9804325at2"/>
<dbReference type="Proteomes" id="UP000001807">
    <property type="component" value="Chromosome"/>
</dbReference>
<dbReference type="GO" id="GO:0005524">
    <property type="term" value="F:ATP binding"/>
    <property type="evidence" value="ECO:0007669"/>
    <property type="project" value="UniProtKB-KW"/>
</dbReference>
<dbReference type="GO" id="GO:0016887">
    <property type="term" value="F:ATP hydrolysis activity"/>
    <property type="evidence" value="ECO:0007669"/>
    <property type="project" value="RHEA"/>
</dbReference>
<dbReference type="GO" id="GO:0003677">
    <property type="term" value="F:DNA binding"/>
    <property type="evidence" value="ECO:0007669"/>
    <property type="project" value="UniProtKB-KW"/>
</dbReference>
<dbReference type="GO" id="GO:0003678">
    <property type="term" value="F:DNA helicase activity"/>
    <property type="evidence" value="ECO:0007669"/>
    <property type="project" value="InterPro"/>
</dbReference>
<dbReference type="GO" id="GO:0006310">
    <property type="term" value="P:DNA recombination"/>
    <property type="evidence" value="ECO:0007669"/>
    <property type="project" value="UniProtKB-KW"/>
</dbReference>
<dbReference type="GO" id="GO:0006281">
    <property type="term" value="P:DNA repair"/>
    <property type="evidence" value="ECO:0007669"/>
    <property type="project" value="UniProtKB-KW"/>
</dbReference>
<dbReference type="CDD" id="cd17992">
    <property type="entry name" value="DEXHc_RecG"/>
    <property type="match status" value="1"/>
</dbReference>
<dbReference type="CDD" id="cd18811">
    <property type="entry name" value="SF2_C_RecG"/>
    <property type="match status" value="1"/>
</dbReference>
<dbReference type="Gene3D" id="3.40.50.300">
    <property type="entry name" value="P-loop containing nucleotide triphosphate hydrolases"/>
    <property type="match status" value="2"/>
</dbReference>
<dbReference type="InterPro" id="IPR004609">
    <property type="entry name" value="ATP-dep_DNA_helicase_RecG"/>
</dbReference>
<dbReference type="InterPro" id="IPR011545">
    <property type="entry name" value="DEAD/DEAH_box_helicase_dom"/>
</dbReference>
<dbReference type="InterPro" id="IPR014001">
    <property type="entry name" value="Helicase_ATP-bd"/>
</dbReference>
<dbReference type="InterPro" id="IPR001650">
    <property type="entry name" value="Helicase_C-like"/>
</dbReference>
<dbReference type="InterPro" id="IPR012340">
    <property type="entry name" value="NA-bd_OB-fold"/>
</dbReference>
<dbReference type="InterPro" id="IPR027417">
    <property type="entry name" value="P-loop_NTPase"/>
</dbReference>
<dbReference type="InterPro" id="IPR047112">
    <property type="entry name" value="RecG/Mfd"/>
</dbReference>
<dbReference type="InterPro" id="IPR045562">
    <property type="entry name" value="RecG_dom3_C"/>
</dbReference>
<dbReference type="InterPro" id="IPR033454">
    <property type="entry name" value="RecG_wedge"/>
</dbReference>
<dbReference type="NCBIfam" id="NF008165">
    <property type="entry name" value="PRK10917.1-3"/>
    <property type="match status" value="1"/>
</dbReference>
<dbReference type="NCBIfam" id="NF008168">
    <property type="entry name" value="PRK10917.2-2"/>
    <property type="match status" value="1"/>
</dbReference>
<dbReference type="NCBIfam" id="TIGR00643">
    <property type="entry name" value="recG"/>
    <property type="match status" value="1"/>
</dbReference>
<dbReference type="PANTHER" id="PTHR47964">
    <property type="entry name" value="ATP-DEPENDENT DNA HELICASE HOMOLOG RECG, CHLOROPLASTIC"/>
    <property type="match status" value="1"/>
</dbReference>
<dbReference type="PANTHER" id="PTHR47964:SF1">
    <property type="entry name" value="ATP-DEPENDENT DNA HELICASE HOMOLOG RECG, CHLOROPLASTIC"/>
    <property type="match status" value="1"/>
</dbReference>
<dbReference type="Pfam" id="PF00270">
    <property type="entry name" value="DEAD"/>
    <property type="match status" value="1"/>
</dbReference>
<dbReference type="Pfam" id="PF00271">
    <property type="entry name" value="Helicase_C"/>
    <property type="match status" value="1"/>
</dbReference>
<dbReference type="Pfam" id="PF19833">
    <property type="entry name" value="RecG_dom3_C"/>
    <property type="match status" value="1"/>
</dbReference>
<dbReference type="Pfam" id="PF17191">
    <property type="entry name" value="RecG_wedge"/>
    <property type="match status" value="1"/>
</dbReference>
<dbReference type="SMART" id="SM00487">
    <property type="entry name" value="DEXDc"/>
    <property type="match status" value="1"/>
</dbReference>
<dbReference type="SMART" id="SM00490">
    <property type="entry name" value="HELICc"/>
    <property type="match status" value="1"/>
</dbReference>
<dbReference type="SUPFAM" id="SSF50249">
    <property type="entry name" value="Nucleic acid-binding proteins"/>
    <property type="match status" value="1"/>
</dbReference>
<dbReference type="SUPFAM" id="SSF52540">
    <property type="entry name" value="P-loop containing nucleoside triphosphate hydrolases"/>
    <property type="match status" value="2"/>
</dbReference>
<dbReference type="PROSITE" id="PS51192">
    <property type="entry name" value="HELICASE_ATP_BIND_1"/>
    <property type="match status" value="1"/>
</dbReference>
<dbReference type="PROSITE" id="PS51194">
    <property type="entry name" value="HELICASE_CTER"/>
    <property type="match status" value="1"/>
</dbReference>
<sequence>MFLHEFEYELKGIGGLGEKGVERLNNLQIFNVKDLIEFFPVKYEDRQNIQTFPDFSKVKSCDMMTVFTVLGHKKFGDSSKKNLKLTVKSINEEPFEILLFNRAFLENVFKIDKKFYIYSKFTYNDYSGLWSCSNFDSEVYSDKPERFKKILPVYSLTEGLTSKKISLYVKEALEYFFKFGQTDIPRFLIEKYSLLSLSDALKEIHFPSSLEMLEKAKKTLIYREIFLLQFFSRYRSSKILFREKKDLSKDLLEKVVSSLPFELTEDQKISIDEIFFDLNSSKPMNRLLQGDVGSGKTLVALLSGLPLIEAGYQVAFMAPTDLLARQHYDNLSNILAPFNISMTLLTGSLRKKDKEQALESIRNGTSGLIVGTHAIFYESTEFKRLAYVIIDEQHKFGVVQREELKNKGEGVDMLLMSATPIPRSFALTLFGDLEVSFIKTLPKGRLPITTYLARHGNEDKVYEFLRKELLKGHQVYFVYPLISSSEKFELKDVNNMCLKLKEVFGEYVVDMLHSKLPSDLKEEIMKNFYSKKVDILVATSVIEVGIDCPNATCMVVEHAERFGLSTLHQIRGRVGRSNLQSFFFLLYKEPLTSAGKFRLKTIKENLDGFKIAEEDLRLRGPGNLFGLEQAGYLKLKIANFVDDREIIVLVREELDLFFYDNSAYDKLDIDLLDNLFCSYLNAGRSI</sequence>
<name>RECG_BORBU</name>
<feature type="chain" id="PRO_0000102139" description="ATP-dependent DNA helicase RecG">
    <location>
        <begin position="1"/>
        <end position="686"/>
    </location>
</feature>
<feature type="domain" description="Helicase ATP-binding" evidence="3">
    <location>
        <begin position="277"/>
        <end position="438"/>
    </location>
</feature>
<feature type="domain" description="Helicase C-terminal" evidence="4">
    <location>
        <begin position="457"/>
        <end position="617"/>
    </location>
</feature>
<feature type="region of interest" description="Wedge domain" evidence="2">
    <location>
        <begin position="47"/>
        <end position="148"/>
    </location>
</feature>
<feature type="short sequence motif" description="DEAH box" evidence="3">
    <location>
        <begin position="391"/>
        <end position="394"/>
    </location>
</feature>
<feature type="binding site" evidence="3">
    <location>
        <begin position="290"/>
        <end position="297"/>
    </location>
    <ligand>
        <name>ATP</name>
        <dbReference type="ChEBI" id="CHEBI:30616"/>
    </ligand>
</feature>
<proteinExistence type="evidence at protein level"/>
<protein>
    <recommendedName>
        <fullName>ATP-dependent DNA helicase RecG</fullName>
        <ecNumber evidence="1">5.6.2.4</ecNumber>
    </recommendedName>
    <alternativeName>
        <fullName>DNA branch migration protein RecG</fullName>
    </alternativeName>
    <alternativeName>
        <fullName>Probable DNA 3'-5' helicase RecG</fullName>
    </alternativeName>
</protein>
<accession>O51528</accession>
<organism>
    <name type="scientific">Borreliella burgdorferi (strain ATCC 35210 / DSM 4680 / CIP 102532 / B31)</name>
    <name type="common">Borrelia burgdorferi</name>
    <dbReference type="NCBI Taxonomy" id="224326"/>
    <lineage>
        <taxon>Bacteria</taxon>
        <taxon>Pseudomonadati</taxon>
        <taxon>Spirochaetota</taxon>
        <taxon>Spirochaetia</taxon>
        <taxon>Spirochaetales</taxon>
        <taxon>Borreliaceae</taxon>
        <taxon>Borreliella</taxon>
    </lineage>
</organism>